<reference key="1">
    <citation type="journal article" date="2016" name="Plant Physiol.">
        <title>CCoAOMT down-regulation activates anthocyanin biosynthesis in petunia.</title>
        <authorList>
            <person name="Shaipulah N.F.M."/>
            <person name="Muhlemann J.K."/>
            <person name="Woodworth B.D."/>
            <person name="Van Moerkercke A."/>
            <person name="Verdonk J.C."/>
            <person name="Ramirez A.A."/>
            <person name="Haring M.A."/>
            <person name="Dudareva N."/>
            <person name="Schuurink R.C."/>
        </authorList>
    </citation>
    <scope>NUCLEOTIDE SEQUENCE [MRNA]</scope>
    <scope>FUNCTION</scope>
    <scope>CATALYTIC ACTIVITY</scope>
    <scope>BIOPHYSICOCHEMICAL PROPERTIES</scope>
    <scope>TISSUE SPECIFICITY</scope>
    <scope>DEVELOPMENTAL STAGE</scope>
    <scope>INDUCTION</scope>
    <source>
        <strain>cv. Mitchell</strain>
        <tissue>Corolla</tissue>
    </source>
</reference>
<organism>
    <name type="scientific">Petunia hybrida</name>
    <name type="common">Petunia</name>
    <dbReference type="NCBI Taxonomy" id="4102"/>
    <lineage>
        <taxon>Eukaryota</taxon>
        <taxon>Viridiplantae</taxon>
        <taxon>Streptophyta</taxon>
        <taxon>Embryophyta</taxon>
        <taxon>Tracheophyta</taxon>
        <taxon>Spermatophyta</taxon>
        <taxon>Magnoliopsida</taxon>
        <taxon>eudicotyledons</taxon>
        <taxon>Gunneridae</taxon>
        <taxon>Pentapetalae</taxon>
        <taxon>asterids</taxon>
        <taxon>lamiids</taxon>
        <taxon>Solanales</taxon>
        <taxon>Solanaceae</taxon>
        <taxon>Petunioideae</taxon>
        <taxon>Petunia</taxon>
    </lineage>
</organism>
<proteinExistence type="evidence at protein level"/>
<protein>
    <recommendedName>
        <fullName evidence="5">Caffeoyl-CoA O-methyltransferase 2</fullName>
        <shortName evidence="5">PhCCoAOMT2</shortName>
        <ecNumber evidence="3 4">2.1.1.104</ecNumber>
    </recommendedName>
    <alternativeName>
        <fullName evidence="6">5-hydroxyferuloyl-CoA O-methyltransferase 1</fullName>
        <ecNumber evidence="4">2.1.1.-</ecNumber>
    </alternativeName>
</protein>
<dbReference type="EC" id="2.1.1.104" evidence="3 4"/>
<dbReference type="EC" id="2.1.1.-" evidence="4"/>
<dbReference type="EMBL" id="KT223507">
    <property type="protein sequence ID" value="ALP75647.1"/>
    <property type="molecule type" value="mRNA"/>
</dbReference>
<dbReference type="SMR" id="A0A0S2UWT1"/>
<dbReference type="UniPathway" id="UPA00711"/>
<dbReference type="GO" id="GO:0005829">
    <property type="term" value="C:cytosol"/>
    <property type="evidence" value="ECO:0000250"/>
    <property type="project" value="UniProtKB"/>
</dbReference>
<dbReference type="GO" id="GO:0042409">
    <property type="term" value="F:caffeoyl-CoA O-methyltransferase activity"/>
    <property type="evidence" value="ECO:0000250"/>
    <property type="project" value="UniProtKB"/>
</dbReference>
<dbReference type="GO" id="GO:0046872">
    <property type="term" value="F:metal ion binding"/>
    <property type="evidence" value="ECO:0007669"/>
    <property type="project" value="UniProtKB-KW"/>
</dbReference>
<dbReference type="GO" id="GO:0007623">
    <property type="term" value="P:circadian rhythm"/>
    <property type="evidence" value="ECO:0000270"/>
    <property type="project" value="UniProtKB"/>
</dbReference>
<dbReference type="GO" id="GO:0010597">
    <property type="term" value="P:green leaf volatile biosynthetic process"/>
    <property type="evidence" value="ECO:0000250"/>
    <property type="project" value="UniProtKB"/>
</dbReference>
<dbReference type="GO" id="GO:0009809">
    <property type="term" value="P:lignin biosynthetic process"/>
    <property type="evidence" value="ECO:0007669"/>
    <property type="project" value="UniProtKB-KW"/>
</dbReference>
<dbReference type="GO" id="GO:0032259">
    <property type="term" value="P:methylation"/>
    <property type="evidence" value="ECO:0007669"/>
    <property type="project" value="UniProtKB-KW"/>
</dbReference>
<dbReference type="GO" id="GO:0009698">
    <property type="term" value="P:phenylpropanoid metabolic process"/>
    <property type="evidence" value="ECO:0000250"/>
    <property type="project" value="UniProtKB"/>
</dbReference>
<dbReference type="CDD" id="cd02440">
    <property type="entry name" value="AdoMet_MTases"/>
    <property type="match status" value="1"/>
</dbReference>
<dbReference type="FunFam" id="3.40.50.150:FF:000147">
    <property type="entry name" value="Caffeoyl-CoA O-methyltransferase 1"/>
    <property type="match status" value="1"/>
</dbReference>
<dbReference type="Gene3D" id="3.40.50.150">
    <property type="entry name" value="Vaccinia Virus protein VP39"/>
    <property type="match status" value="1"/>
</dbReference>
<dbReference type="InterPro" id="IPR050362">
    <property type="entry name" value="Cation-dep_OMT"/>
</dbReference>
<dbReference type="InterPro" id="IPR029063">
    <property type="entry name" value="SAM-dependent_MTases_sf"/>
</dbReference>
<dbReference type="InterPro" id="IPR002935">
    <property type="entry name" value="SAM_O-MeTrfase"/>
</dbReference>
<dbReference type="PANTHER" id="PTHR10509:SF94">
    <property type="entry name" value="CAFFEOYL-COA O-METHYLTRANSFERASE 3"/>
    <property type="match status" value="1"/>
</dbReference>
<dbReference type="PANTHER" id="PTHR10509">
    <property type="entry name" value="O-METHYLTRANSFERASE-RELATED"/>
    <property type="match status" value="1"/>
</dbReference>
<dbReference type="Pfam" id="PF01596">
    <property type="entry name" value="Methyltransf_3"/>
    <property type="match status" value="1"/>
</dbReference>
<dbReference type="SUPFAM" id="SSF53335">
    <property type="entry name" value="S-adenosyl-L-methionine-dependent methyltransferases"/>
    <property type="match status" value="1"/>
</dbReference>
<dbReference type="PROSITE" id="PS51682">
    <property type="entry name" value="SAM_OMT_I"/>
    <property type="match status" value="1"/>
</dbReference>
<evidence type="ECO:0000250" key="1">
    <source>
        <dbReference type="UniProtKB" id="A0A0S2UWC9"/>
    </source>
</evidence>
<evidence type="ECO:0000250" key="2">
    <source>
        <dbReference type="UniProtKB" id="Q40313"/>
    </source>
</evidence>
<evidence type="ECO:0000255" key="3">
    <source>
        <dbReference type="PROSITE-ProRule" id="PRU01019"/>
    </source>
</evidence>
<evidence type="ECO:0000269" key="4">
    <source>
    </source>
</evidence>
<evidence type="ECO:0000303" key="5">
    <source>
    </source>
</evidence>
<evidence type="ECO:0000305" key="6"/>
<comment type="function">
    <text evidence="1 4">Involved in the production of floral volatile phenylpropanoids in flowers of fragrant cultivars (e.g. cv. Mitchell and cv. V26) from cinnamic acid, a common precursor with the anthocyanin biosynthesis pathway involved in flower pigmentation (By similarity). Methylates caffeoyl-CoA to feruloyl-CoA, also able to methylate 5-hydroxyferuloyl-CoA (PubMed:26620524).</text>
</comment>
<comment type="catalytic activity">
    <reaction evidence="3 4">
        <text>(E)-caffeoyl-CoA + S-adenosyl-L-methionine = (E)-feruloyl-CoA + S-adenosyl-L-homocysteine + H(+)</text>
        <dbReference type="Rhea" id="RHEA:16925"/>
        <dbReference type="ChEBI" id="CHEBI:15378"/>
        <dbReference type="ChEBI" id="CHEBI:57856"/>
        <dbReference type="ChEBI" id="CHEBI:59789"/>
        <dbReference type="ChEBI" id="CHEBI:87136"/>
        <dbReference type="ChEBI" id="CHEBI:87305"/>
        <dbReference type="EC" id="2.1.1.104"/>
    </reaction>
    <physiologicalReaction direction="left-to-right" evidence="4">
        <dbReference type="Rhea" id="RHEA:16926"/>
    </physiologicalReaction>
</comment>
<comment type="catalytic activity">
    <reaction evidence="4">
        <text>(E)-5-hydroxyferuloyl-CoA + S-adenosyl-L-methionine = (E)-sinapoyl-CoA + S-adenosyl-L-homocysteine + H(+)</text>
        <dbReference type="Rhea" id="RHEA:64860"/>
        <dbReference type="ChEBI" id="CHEBI:15378"/>
        <dbReference type="ChEBI" id="CHEBI:57393"/>
        <dbReference type="ChEBI" id="CHEBI:57856"/>
        <dbReference type="ChEBI" id="CHEBI:59789"/>
        <dbReference type="ChEBI" id="CHEBI:156249"/>
    </reaction>
    <physiologicalReaction direction="left-to-right" evidence="4">
        <dbReference type="Rhea" id="RHEA:64861"/>
    </physiologicalReaction>
</comment>
<comment type="cofactor">
    <cofactor evidence="2">
        <name>a divalent metal cation</name>
        <dbReference type="ChEBI" id="CHEBI:60240"/>
    </cofactor>
    <text evidence="2">Binds 1 divalent metal cation per subunit.</text>
</comment>
<comment type="biophysicochemical properties">
    <kinetics>
        <Vmax evidence="4">11.6 pmol/sec/mg enzyme with (E)-caffeoyl-CoA as substrate</Vmax>
    </kinetics>
</comment>
<comment type="pathway">
    <text evidence="1">Aromatic compound metabolism; phenylpropanoid biosynthesis.</text>
</comment>
<comment type="subcellular location">
    <subcellularLocation>
        <location evidence="1">Cytoplasm</location>
        <location evidence="1">Cytosol</location>
    </subcellularLocation>
</comment>
<comment type="tissue specificity">
    <text evidence="4">Mostly expressed in petal limbs and tubes, and, at low levels, in stems, roots and leaves.</text>
</comment>
<comment type="developmental stage">
    <text evidence="4">Accumulates during flower development with highest levels in open flowers, at anthesis, and fades out as flowers are senescing.</text>
</comment>
<comment type="induction">
    <text evidence="4">Circadian-regulation with peak levels occurring in the afternoon in flowers.</text>
</comment>
<comment type="similarity">
    <text evidence="3">Belongs to the class I-like SAM-binding methyltransferase superfamily. Cation-dependent O-methyltransferase family. CCoAMT subfamily.</text>
</comment>
<gene>
    <name evidence="5" type="primary">CCOAOMT2</name>
</gene>
<name>CAMT2_PETHY</name>
<feature type="chain" id="PRO_0000451495" description="Caffeoyl-CoA O-methyltransferase 2">
    <location>
        <begin position="1"/>
        <end position="242"/>
    </location>
</feature>
<feature type="binding site" evidence="2">
    <location>
        <position position="16"/>
    </location>
    <ligand>
        <name>substrate</name>
    </ligand>
</feature>
<feature type="binding site" evidence="3">
    <location>
        <position position="58"/>
    </location>
    <ligand>
        <name>S-adenosyl-L-methionine</name>
        <dbReference type="ChEBI" id="CHEBI:59789"/>
    </ligand>
</feature>
<feature type="binding site" evidence="3">
    <location>
        <position position="80"/>
    </location>
    <ligand>
        <name>S-adenosyl-L-methionine</name>
        <dbReference type="ChEBI" id="CHEBI:59789"/>
    </ligand>
</feature>
<feature type="binding site" evidence="3">
    <location>
        <begin position="82"/>
        <end position="83"/>
    </location>
    <ligand>
        <name>S-adenosyl-L-methionine</name>
        <dbReference type="ChEBI" id="CHEBI:59789"/>
    </ligand>
</feature>
<feature type="binding site" evidence="3">
    <location>
        <position position="88"/>
    </location>
    <ligand>
        <name>S-adenosyl-L-methionine</name>
        <dbReference type="ChEBI" id="CHEBI:59789"/>
    </ligand>
</feature>
<feature type="binding site" evidence="3">
    <location>
        <position position="106"/>
    </location>
    <ligand>
        <name>S-adenosyl-L-methionine</name>
        <dbReference type="ChEBI" id="CHEBI:59789"/>
    </ligand>
</feature>
<feature type="binding site" evidence="3">
    <location>
        <position position="135"/>
    </location>
    <ligand>
        <name>S-adenosyl-L-methionine</name>
        <dbReference type="ChEBI" id="CHEBI:59789"/>
    </ligand>
</feature>
<feature type="binding site" evidence="3">
    <location>
        <position position="158"/>
    </location>
    <ligand>
        <name>a divalent metal cation</name>
        <dbReference type="ChEBI" id="CHEBI:60240"/>
    </ligand>
</feature>
<feature type="binding site" evidence="2">
    <location>
        <position position="158"/>
    </location>
    <ligand>
        <name>substrate</name>
    </ligand>
</feature>
<feature type="binding site" evidence="3">
    <location>
        <position position="160"/>
    </location>
    <ligand>
        <name>S-adenosyl-L-methionine</name>
        <dbReference type="ChEBI" id="CHEBI:59789"/>
    </ligand>
</feature>
<feature type="binding site" evidence="3">
    <location>
        <position position="184"/>
    </location>
    <ligand>
        <name>a divalent metal cation</name>
        <dbReference type="ChEBI" id="CHEBI:60240"/>
    </ligand>
</feature>
<feature type="binding site" evidence="3">
    <location>
        <position position="185"/>
    </location>
    <ligand>
        <name>a divalent metal cation</name>
        <dbReference type="ChEBI" id="CHEBI:60240"/>
    </ligand>
</feature>
<feature type="binding site" evidence="2">
    <location>
        <position position="189"/>
    </location>
    <ligand>
        <name>substrate</name>
    </ligand>
</feature>
<keyword id="KW-0963">Cytoplasm</keyword>
<keyword id="KW-0438">Lignin biosynthesis</keyword>
<keyword id="KW-0479">Metal-binding</keyword>
<keyword id="KW-0489">Methyltransferase</keyword>
<keyword id="KW-0949">S-adenosyl-L-methionine</keyword>
<keyword id="KW-0808">Transferase</keyword>
<accession>A0A0S2UWT1</accession>
<sequence>MANNGENGRHQEVGHKSLLQSDALYQYILDTSVYPREPEPMKELREITAKHPWNIMTTSADEGQFLSMLIKLINAKNTMEIGVFTGYSSLATAMALPDDGKILAMDINRENYEIGLPVIEKAGLAHKIEFKEGPALPVLDQMIEDGKYHGSYDFIFVDADKDNYLNYHKRLIDLVKVGGLIGYDNTLWNGSVVAPPDAPLRKYVRYYRDFVLELNKALAADPRIEICQLPVGDGITLCRRIS</sequence>